<gene>
    <name evidence="4" type="primary">rlp</name>
    <name evidence="8" type="ordered locus">Rru_A1998</name>
</gene>
<proteinExistence type="evidence at protein level"/>
<protein>
    <recommendedName>
        <fullName evidence="5">5-methylthioribulose-1-phosphate isomerase</fullName>
        <ecNumber evidence="1">5.3.3.23</ecNumber>
    </recommendedName>
</protein>
<keyword id="KW-0028">Amino-acid biosynthesis</keyword>
<keyword id="KW-0413">Isomerase</keyword>
<keyword id="KW-0486">Methionine biosynthesis</keyword>
<keyword id="KW-1185">Reference proteome</keyword>
<sequence length="374" mass="38880">MTDRLRATYRVKATAASIEARAKGIAVEQSVEMPLSAIDDPAVLDGIVGVVEEITERGEDCFEVRLALSTATIGGDAGQLFNMLFGNTSLQDDTVLLDIDLPDDLLASFGGPNIGAAGLRARVGASADRALTCSALKPQGLPPDRLADLARRMALGGLDFIKDDHGMADQAYAPFASRVGAVAAAVDEVNRQTGGQTRYLPSLSGHLDQLRSQVRTGLDHGIDTFLIAPMIVGPSTFHAVVREFPGAAFFAHPTLAGPSRIAPPAHFGKLFRLLGADAVIFPNSGGRFGYSRDTCQAVAEAALGPWGGLHASLPVPAGGMSLARVPEMIATYGPDVIVLIGGNLLEARDRLTEETAAFVASVAGAASRGCGLAP</sequence>
<dbReference type="EC" id="5.3.3.23" evidence="1"/>
<dbReference type="EMBL" id="CP000230">
    <property type="protein sequence ID" value="ABC22798.1"/>
    <property type="molecule type" value="Genomic_DNA"/>
</dbReference>
<dbReference type="RefSeq" id="WP_011389751.1">
    <property type="nucleotide sequence ID" value="NC_007643.1"/>
</dbReference>
<dbReference type="RefSeq" id="YP_427085.1">
    <property type="nucleotide sequence ID" value="NC_007643.1"/>
</dbReference>
<dbReference type="SMR" id="Q2RSU7"/>
<dbReference type="IntAct" id="Q2RSU7">
    <property type="interactions" value="1"/>
</dbReference>
<dbReference type="STRING" id="269796.Rru_A1998"/>
<dbReference type="EnsemblBacteria" id="ABC22798">
    <property type="protein sequence ID" value="ABC22798"/>
    <property type="gene ID" value="Rru_A1998"/>
</dbReference>
<dbReference type="KEGG" id="rru:Rru_A1998"/>
<dbReference type="PATRIC" id="fig|269796.9.peg.2083"/>
<dbReference type="eggNOG" id="COG1850">
    <property type="taxonomic scope" value="Bacteria"/>
</dbReference>
<dbReference type="HOGENOM" id="CLU_031450_3_1_5"/>
<dbReference type="PhylomeDB" id="Q2RSU7"/>
<dbReference type="BioCyc" id="MetaCyc:MONOMER-17871"/>
<dbReference type="BRENDA" id="5.3.3.23">
    <property type="organism ID" value="5420"/>
</dbReference>
<dbReference type="UniPathway" id="UPA00064"/>
<dbReference type="UniPathway" id="UPA00904"/>
<dbReference type="Proteomes" id="UP000001929">
    <property type="component" value="Chromosome"/>
</dbReference>
<dbReference type="GO" id="GO:0016853">
    <property type="term" value="F:isomerase activity"/>
    <property type="evidence" value="ECO:0007669"/>
    <property type="project" value="UniProtKB-KW"/>
</dbReference>
<dbReference type="GO" id="GO:0000287">
    <property type="term" value="F:magnesium ion binding"/>
    <property type="evidence" value="ECO:0007669"/>
    <property type="project" value="InterPro"/>
</dbReference>
<dbReference type="GO" id="GO:0016984">
    <property type="term" value="F:ribulose-bisphosphate carboxylase activity"/>
    <property type="evidence" value="ECO:0007669"/>
    <property type="project" value="InterPro"/>
</dbReference>
<dbReference type="GO" id="GO:0052865">
    <property type="term" value="P:1-deoxy-D-xylulose 5-phosphate biosynthetic process"/>
    <property type="evidence" value="ECO:0007669"/>
    <property type="project" value="UniProtKB-UniPathway"/>
</dbReference>
<dbReference type="GO" id="GO:0015977">
    <property type="term" value="P:carbon fixation"/>
    <property type="evidence" value="ECO:0007669"/>
    <property type="project" value="InterPro"/>
</dbReference>
<dbReference type="GO" id="GO:0019509">
    <property type="term" value="P:L-methionine salvage from methylthioadenosine"/>
    <property type="evidence" value="ECO:0007669"/>
    <property type="project" value="UniProtKB-UniPathway"/>
</dbReference>
<dbReference type="CDD" id="cd08210">
    <property type="entry name" value="RLP_RrRLP"/>
    <property type="match status" value="1"/>
</dbReference>
<dbReference type="Gene3D" id="3.20.20.110">
    <property type="entry name" value="Ribulose bisphosphate carboxylase, large subunit, C-terminal domain"/>
    <property type="match status" value="1"/>
</dbReference>
<dbReference type="Gene3D" id="3.30.70.150">
    <property type="entry name" value="RuBisCO large subunit, N-terminal domain"/>
    <property type="match status" value="1"/>
</dbReference>
<dbReference type="InterPro" id="IPR033966">
    <property type="entry name" value="RuBisCO"/>
</dbReference>
<dbReference type="InterPro" id="IPR000685">
    <property type="entry name" value="RuBisCO_lsu_C"/>
</dbReference>
<dbReference type="InterPro" id="IPR036376">
    <property type="entry name" value="RuBisCO_lsu_C_sf"/>
</dbReference>
<dbReference type="InterPro" id="IPR036422">
    <property type="entry name" value="RuBisCO_lsu_N_sf"/>
</dbReference>
<dbReference type="PANTHER" id="PTHR42704">
    <property type="entry name" value="RIBULOSE BISPHOSPHATE CARBOXYLASE"/>
    <property type="match status" value="1"/>
</dbReference>
<dbReference type="PANTHER" id="PTHR42704:SF17">
    <property type="entry name" value="RIBULOSE BISPHOSPHATE CARBOXYLASE LARGE CHAIN"/>
    <property type="match status" value="1"/>
</dbReference>
<dbReference type="Pfam" id="PF00016">
    <property type="entry name" value="RuBisCO_large"/>
    <property type="match status" value="1"/>
</dbReference>
<dbReference type="SFLD" id="SFLDF00158">
    <property type="entry name" value="5-methylthio-D-ribulose_1-phos"/>
    <property type="match status" value="1"/>
</dbReference>
<dbReference type="SFLD" id="SFLDG00301">
    <property type="entry name" value="RuBisCO-like_proteins"/>
    <property type="match status" value="1"/>
</dbReference>
<dbReference type="SUPFAM" id="SSF51649">
    <property type="entry name" value="RuBisCo, C-terminal domain"/>
    <property type="match status" value="1"/>
</dbReference>
<dbReference type="SUPFAM" id="SSF54966">
    <property type="entry name" value="RuBisCO, large subunit, small (N-terminal) domain"/>
    <property type="match status" value="1"/>
</dbReference>
<name>RLP_RHORT</name>
<comment type="function">
    <text evidence="1 2">Catalyzes the conversion of 5-methylthio-D-ribulose 1-phosphate (MTRu-1P) to a 3:1 mixture of 1-methylthioxylulose 5-phosphate (MTXu-5P) and 1-methylthioribulose 5-phosphate (MTRu-5P) (PubMed:18826254). Involved in the MTA-isoprenoid shunt of the methionine salvage pathway (PubMed:23042035).</text>
</comment>
<comment type="catalytic activity">
    <reaction evidence="1">
        <text>5-(methylsulfanyl)-D-ribulose 1-phosphate = S-methyl-1-thio-D-xylulose 5-phosphate</text>
        <dbReference type="Rhea" id="RHEA:57100"/>
        <dbReference type="ChEBI" id="CHEBI:58548"/>
        <dbReference type="ChEBI" id="CHEBI:141466"/>
        <dbReference type="EC" id="5.3.3.23"/>
    </reaction>
</comment>
<comment type="catalytic activity">
    <reaction evidence="1">
        <text>5-(methylsulfanyl)-D-ribulose 1-phosphate = 1-(methylsulfanyl)ribulose 5-phosphate</text>
        <dbReference type="Rhea" id="RHEA:57580"/>
        <dbReference type="ChEBI" id="CHEBI:58548"/>
        <dbReference type="ChEBI" id="CHEBI:85606"/>
        <dbReference type="EC" id="5.3.3.23"/>
    </reaction>
</comment>
<comment type="pathway">
    <text evidence="7">Amino-acid biosynthesis; L-methionine biosynthesis via salvage pathway.</text>
</comment>
<comment type="pathway">
    <text evidence="6">Metabolic intermediate biosynthesis; 1-deoxy-D-xylulose 5-phosphate biosynthesis.</text>
</comment>
<comment type="disruption phenotype">
    <text evidence="1 2 3">Disruption of the gene abolishes the ability to utilize 5'-methylthioadenosine (MTA) as a sole sulfur source (PubMed:18826254). Mutant cannot release methanethiol upon MTA feeding and accumulates MTRu-1P (PubMed:23042035). Inactivation of the gene increases ethylene production from MTA-grown cells (PubMed:29133429).</text>
</comment>
<comment type="similarity">
    <text evidence="5">Belongs to the RuBisCO large chain family. Type IV subfamily.</text>
</comment>
<evidence type="ECO:0000269" key="1">
    <source>
    </source>
</evidence>
<evidence type="ECO:0000269" key="2">
    <source>
    </source>
</evidence>
<evidence type="ECO:0000269" key="3">
    <source>
    </source>
</evidence>
<evidence type="ECO:0000303" key="4">
    <source>
    </source>
</evidence>
<evidence type="ECO:0000305" key="5"/>
<evidence type="ECO:0000305" key="6">
    <source>
    </source>
</evidence>
<evidence type="ECO:0000305" key="7">
    <source>
    </source>
</evidence>
<evidence type="ECO:0000312" key="8">
    <source>
        <dbReference type="EMBL" id="ABC22798.1"/>
    </source>
</evidence>
<feature type="chain" id="PRO_0000445578" description="5-methylthioribulose-1-phosphate isomerase">
    <location>
        <begin position="1"/>
        <end position="374"/>
    </location>
</feature>
<organism>
    <name type="scientific">Rhodospirillum rubrum (strain ATCC 11170 / ATH 1.1.1 / DSM 467 / LMG 4362 / NCIMB 8255 / S1)</name>
    <dbReference type="NCBI Taxonomy" id="269796"/>
    <lineage>
        <taxon>Bacteria</taxon>
        <taxon>Pseudomonadati</taxon>
        <taxon>Pseudomonadota</taxon>
        <taxon>Alphaproteobacteria</taxon>
        <taxon>Rhodospirillales</taxon>
        <taxon>Rhodospirillaceae</taxon>
        <taxon>Rhodospirillum</taxon>
    </lineage>
</organism>
<reference key="1">
    <citation type="journal article" date="2011" name="Stand. Genomic Sci.">
        <title>Complete genome sequence of Rhodospirillum rubrum type strain (S1).</title>
        <authorList>
            <person name="Munk A.C."/>
            <person name="Copeland A."/>
            <person name="Lucas S."/>
            <person name="Lapidus A."/>
            <person name="Del Rio T.G."/>
            <person name="Barry K."/>
            <person name="Detter J.C."/>
            <person name="Hammon N."/>
            <person name="Israni S."/>
            <person name="Pitluck S."/>
            <person name="Brettin T."/>
            <person name="Bruce D."/>
            <person name="Han C."/>
            <person name="Tapia R."/>
            <person name="Gilna P."/>
            <person name="Schmutz J."/>
            <person name="Larimer F."/>
            <person name="Land M."/>
            <person name="Kyrpides N.C."/>
            <person name="Mavromatis K."/>
            <person name="Richardson P."/>
            <person name="Rohde M."/>
            <person name="Goeker M."/>
            <person name="Klenk H.P."/>
            <person name="Zhang Y."/>
            <person name="Roberts G.P."/>
            <person name="Reslewic S."/>
            <person name="Schwartz D.C."/>
        </authorList>
    </citation>
    <scope>NUCLEOTIDE SEQUENCE [LARGE SCALE GENOMIC DNA]</scope>
    <source>
        <strain>ATCC 11170 / ATH 1.1.1 / DSM 467 / LMG 4362 / NCIMB 8255 / S1</strain>
    </source>
</reference>
<reference key="2">
    <citation type="journal article" date="2008" name="Biochemistry">
        <title>Mechanistic diversity in the RuBisCO superfamily: a novel isomerization reaction catalyzed by the RuBisCO-like protein from Rhodospirillum rubrum.</title>
        <authorList>
            <person name="Imker H.J."/>
            <person name="Singh J."/>
            <person name="Warlick B.P."/>
            <person name="Tabita F.R."/>
            <person name="Gerlt J.A."/>
        </authorList>
    </citation>
    <scope>FUNCTION</scope>
    <scope>CATALYTIC ACTIVITY</scope>
    <scope>DISRUPTION PHENOTYPE</scope>
</reference>
<reference key="3">
    <citation type="journal article" date="2012" name="Nat. Chem. Biol.">
        <title>A RubisCO-like protein links SAM metabolism with isoprenoid biosynthesis.</title>
        <authorList>
            <person name="Erb T.J."/>
            <person name="Evans B.S."/>
            <person name="Cho K."/>
            <person name="Warlick B.P."/>
            <person name="Sriram J."/>
            <person name="Wood B.M."/>
            <person name="Imker H.J."/>
            <person name="Sweedler J.V."/>
            <person name="Tabita F.R."/>
            <person name="Gerlt J.A."/>
        </authorList>
    </citation>
    <scope>FUNCTION</scope>
    <scope>PATHWAY</scope>
    <scope>DISRUPTION PHENOTYPE</scope>
    <source>
        <strain>ATCC 11170 / ATH 1.1.1 / DSM 467 / LMG 4362 / NCIMB 8255 / S1</strain>
    </source>
</reference>
<reference key="4">
    <citation type="journal article" date="2017" name="Proc. Natl. Acad. Sci. U.S.A.">
        <title>Microbial pathway for anaerobic 5'-methylthioadenosine metabolism coupled to ethylene formation.</title>
        <authorList>
            <person name="North J.A."/>
            <person name="Miller A.R."/>
            <person name="Wildenthal J.A."/>
            <person name="Young S.J."/>
            <person name="Tabita F.R."/>
        </authorList>
    </citation>
    <scope>PATHWAY</scope>
    <scope>DISRUPTION PHENOTYPE</scope>
    <source>
        <strain>ATCC 11170 / ATH 1.1.1 / DSM 467 / LMG 4362 / NCIMB 8255 / S1</strain>
    </source>
</reference>
<accession>Q2RSU7</accession>